<dbReference type="EMBL" id="L77117">
    <property type="protein sequence ID" value="AAB99358.1"/>
    <property type="molecule type" value="Genomic_DNA"/>
</dbReference>
<dbReference type="PIR" id="H64466">
    <property type="entry name" value="H64466"/>
</dbReference>
<dbReference type="STRING" id="243232.MJ_1337"/>
<dbReference type="PaxDb" id="243232-MJ_1337"/>
<dbReference type="EnsemblBacteria" id="AAB99358">
    <property type="protein sequence ID" value="AAB99358"/>
    <property type="gene ID" value="MJ_1337"/>
</dbReference>
<dbReference type="KEGG" id="mja:MJ_1337"/>
<dbReference type="eggNOG" id="arCOG05078">
    <property type="taxonomic scope" value="Archaea"/>
</dbReference>
<dbReference type="HOGENOM" id="CLU_979811_0_0_2"/>
<dbReference type="InParanoid" id="Q58733"/>
<dbReference type="OrthoDB" id="15148at2157"/>
<dbReference type="Proteomes" id="UP000000805">
    <property type="component" value="Chromosome"/>
</dbReference>
<dbReference type="Gene3D" id="3.40.1190.20">
    <property type="match status" value="1"/>
</dbReference>
<dbReference type="InterPro" id="IPR029056">
    <property type="entry name" value="Ribokinase-like"/>
</dbReference>
<dbReference type="SUPFAM" id="SSF53613">
    <property type="entry name" value="Ribokinase-like"/>
    <property type="match status" value="1"/>
</dbReference>
<accession>Q58733</accession>
<proteinExistence type="predicted"/>
<feature type="chain" id="PRO_0000107281" description="Uncharacterized protein MJ1337">
    <location>
        <begin position="1"/>
        <end position="231"/>
    </location>
</feature>
<sequence length="231" mass="25675">MIGAVLKTLEYFDEKDVKVITTGDIGEGDGSLKIYDALKEIDDDLVIIHYIKPKISKIREINFSPKIIADAGGMYAAKAANIGDKFYLFLPDVGELAFLADEKASHPAYVRGFISEIDDNEVPKLIERDYKLKMPKYMVVKGETDYTIREEKIIDKIKEPKIKAMECIGGTGDTLTEIVSSLISVDFKTEEALSLGCKINRKLGEIANVNPNTQITEIINAIPKALENTLK</sequence>
<name>Y1337_METJA</name>
<gene>
    <name type="ordered locus">MJ1337</name>
</gene>
<reference key="1">
    <citation type="journal article" date="1996" name="Science">
        <title>Complete genome sequence of the methanogenic archaeon, Methanococcus jannaschii.</title>
        <authorList>
            <person name="Bult C.J."/>
            <person name="White O."/>
            <person name="Olsen G.J."/>
            <person name="Zhou L."/>
            <person name="Fleischmann R.D."/>
            <person name="Sutton G.G."/>
            <person name="Blake J.A."/>
            <person name="FitzGerald L.M."/>
            <person name="Clayton R.A."/>
            <person name="Gocayne J.D."/>
            <person name="Kerlavage A.R."/>
            <person name="Dougherty B.A."/>
            <person name="Tomb J.-F."/>
            <person name="Adams M.D."/>
            <person name="Reich C.I."/>
            <person name="Overbeek R."/>
            <person name="Kirkness E.F."/>
            <person name="Weinstock K.G."/>
            <person name="Merrick J.M."/>
            <person name="Glodek A."/>
            <person name="Scott J.L."/>
            <person name="Geoghagen N.S.M."/>
            <person name="Weidman J.F."/>
            <person name="Fuhrmann J.L."/>
            <person name="Nguyen D."/>
            <person name="Utterback T.R."/>
            <person name="Kelley J.M."/>
            <person name="Peterson J.D."/>
            <person name="Sadow P.W."/>
            <person name="Hanna M.C."/>
            <person name="Cotton M.D."/>
            <person name="Roberts K.M."/>
            <person name="Hurst M.A."/>
            <person name="Kaine B.P."/>
            <person name="Borodovsky M."/>
            <person name="Klenk H.-P."/>
            <person name="Fraser C.M."/>
            <person name="Smith H.O."/>
            <person name="Woese C.R."/>
            <person name="Venter J.C."/>
        </authorList>
    </citation>
    <scope>NUCLEOTIDE SEQUENCE [LARGE SCALE GENOMIC DNA]</scope>
    <source>
        <strain>ATCC 43067 / DSM 2661 / JAL-1 / JCM 10045 / NBRC 100440</strain>
    </source>
</reference>
<organism>
    <name type="scientific">Methanocaldococcus jannaschii (strain ATCC 43067 / DSM 2661 / JAL-1 / JCM 10045 / NBRC 100440)</name>
    <name type="common">Methanococcus jannaschii</name>
    <dbReference type="NCBI Taxonomy" id="243232"/>
    <lineage>
        <taxon>Archaea</taxon>
        <taxon>Methanobacteriati</taxon>
        <taxon>Methanobacteriota</taxon>
        <taxon>Methanomada group</taxon>
        <taxon>Methanococci</taxon>
        <taxon>Methanococcales</taxon>
        <taxon>Methanocaldococcaceae</taxon>
        <taxon>Methanocaldococcus</taxon>
    </lineage>
</organism>
<keyword id="KW-1185">Reference proteome</keyword>
<protein>
    <recommendedName>
        <fullName>Uncharacterized protein MJ1337</fullName>
    </recommendedName>
</protein>